<keyword id="KW-0997">Cell inner membrane</keyword>
<keyword id="KW-1003">Cell membrane</keyword>
<keyword id="KW-0472">Membrane</keyword>
<keyword id="KW-0520">NAD</keyword>
<keyword id="KW-0874">Quinone</keyword>
<keyword id="KW-1278">Translocase</keyword>
<keyword id="KW-0813">Transport</keyword>
<keyword id="KW-0830">Ubiquinone</keyword>
<gene>
    <name evidence="1" type="primary">nuoC</name>
    <name type="ordered locus">RALTA_A1036</name>
</gene>
<comment type="function">
    <text evidence="1">NDH-1 shuttles electrons from NADH, via FMN and iron-sulfur (Fe-S) centers, to quinones in the respiratory chain. The immediate electron acceptor for the enzyme in this species is believed to be ubiquinone. Couples the redox reaction to proton translocation (for every two electrons transferred, four hydrogen ions are translocated across the cytoplasmic membrane), and thus conserves the redox energy in a proton gradient.</text>
</comment>
<comment type="catalytic activity">
    <reaction evidence="1">
        <text>a quinone + NADH + 5 H(+)(in) = a quinol + NAD(+) + 4 H(+)(out)</text>
        <dbReference type="Rhea" id="RHEA:57888"/>
        <dbReference type="ChEBI" id="CHEBI:15378"/>
        <dbReference type="ChEBI" id="CHEBI:24646"/>
        <dbReference type="ChEBI" id="CHEBI:57540"/>
        <dbReference type="ChEBI" id="CHEBI:57945"/>
        <dbReference type="ChEBI" id="CHEBI:132124"/>
    </reaction>
</comment>
<comment type="subunit">
    <text evidence="1">NDH-1 is composed of 14 different subunits. Subunits NuoB, C, D, E, F, and G constitute the peripheral sector of the complex.</text>
</comment>
<comment type="subcellular location">
    <subcellularLocation>
        <location evidence="1">Cell inner membrane</location>
        <topology evidence="1">Peripheral membrane protein</topology>
        <orientation evidence="1">Cytoplasmic side</orientation>
    </subcellularLocation>
</comment>
<comment type="similarity">
    <text evidence="1">Belongs to the complex I 30 kDa subunit family.</text>
</comment>
<protein>
    <recommendedName>
        <fullName evidence="1">NADH-quinone oxidoreductase subunit C</fullName>
        <ecNumber evidence="1">7.1.1.-</ecNumber>
    </recommendedName>
    <alternativeName>
        <fullName evidence="1">NADH dehydrogenase I subunit C</fullName>
    </alternativeName>
    <alternativeName>
        <fullName evidence="1">NDH-1 subunit C</fullName>
    </alternativeName>
</protein>
<dbReference type="EC" id="7.1.1.-" evidence="1"/>
<dbReference type="EMBL" id="CU633749">
    <property type="protein sequence ID" value="CAQ69001.1"/>
    <property type="molecule type" value="Genomic_DNA"/>
</dbReference>
<dbReference type="RefSeq" id="WP_012352331.1">
    <property type="nucleotide sequence ID" value="NC_010528.1"/>
</dbReference>
<dbReference type="SMR" id="B3R3W9"/>
<dbReference type="GeneID" id="29762435"/>
<dbReference type="KEGG" id="cti:RALTA_A1036"/>
<dbReference type="eggNOG" id="COG0852">
    <property type="taxonomic scope" value="Bacteria"/>
</dbReference>
<dbReference type="HOGENOM" id="CLU_042628_2_1_4"/>
<dbReference type="BioCyc" id="CTAI977880:RALTA_RS04925-MONOMER"/>
<dbReference type="Proteomes" id="UP000001692">
    <property type="component" value="Chromosome 1"/>
</dbReference>
<dbReference type="GO" id="GO:0005886">
    <property type="term" value="C:plasma membrane"/>
    <property type="evidence" value="ECO:0007669"/>
    <property type="project" value="UniProtKB-SubCell"/>
</dbReference>
<dbReference type="GO" id="GO:0008137">
    <property type="term" value="F:NADH dehydrogenase (ubiquinone) activity"/>
    <property type="evidence" value="ECO:0007669"/>
    <property type="project" value="InterPro"/>
</dbReference>
<dbReference type="GO" id="GO:0050136">
    <property type="term" value="F:NADH:ubiquinone reductase (non-electrogenic) activity"/>
    <property type="evidence" value="ECO:0007669"/>
    <property type="project" value="UniProtKB-UniRule"/>
</dbReference>
<dbReference type="GO" id="GO:0048038">
    <property type="term" value="F:quinone binding"/>
    <property type="evidence" value="ECO:0007669"/>
    <property type="project" value="UniProtKB-KW"/>
</dbReference>
<dbReference type="Gene3D" id="3.30.460.80">
    <property type="entry name" value="NADH:ubiquinone oxidoreductase, 30kDa subunit"/>
    <property type="match status" value="1"/>
</dbReference>
<dbReference type="HAMAP" id="MF_01357">
    <property type="entry name" value="NDH1_NuoC"/>
    <property type="match status" value="1"/>
</dbReference>
<dbReference type="InterPro" id="IPR010218">
    <property type="entry name" value="NADH_DH_suC"/>
</dbReference>
<dbReference type="InterPro" id="IPR037232">
    <property type="entry name" value="NADH_quin_OxRdtase_su_C/D-like"/>
</dbReference>
<dbReference type="InterPro" id="IPR001268">
    <property type="entry name" value="NADH_UbQ_OxRdtase_30kDa_su"/>
</dbReference>
<dbReference type="InterPro" id="IPR020396">
    <property type="entry name" value="NADH_UbQ_OxRdtase_CS"/>
</dbReference>
<dbReference type="NCBIfam" id="TIGR01961">
    <property type="entry name" value="NuoC_fam"/>
    <property type="match status" value="1"/>
</dbReference>
<dbReference type="NCBIfam" id="NF004730">
    <property type="entry name" value="PRK06074.1-1"/>
    <property type="match status" value="1"/>
</dbReference>
<dbReference type="PANTHER" id="PTHR10884:SF14">
    <property type="entry name" value="NADH DEHYDROGENASE [UBIQUINONE] IRON-SULFUR PROTEIN 3, MITOCHONDRIAL"/>
    <property type="match status" value="1"/>
</dbReference>
<dbReference type="PANTHER" id="PTHR10884">
    <property type="entry name" value="NADH DEHYDROGENASE UBIQUINONE IRON-SULFUR PROTEIN 3"/>
    <property type="match status" value="1"/>
</dbReference>
<dbReference type="Pfam" id="PF00329">
    <property type="entry name" value="Complex1_30kDa"/>
    <property type="match status" value="1"/>
</dbReference>
<dbReference type="SUPFAM" id="SSF143243">
    <property type="entry name" value="Nqo5-like"/>
    <property type="match status" value="1"/>
</dbReference>
<dbReference type="PROSITE" id="PS00542">
    <property type="entry name" value="COMPLEX1_30K"/>
    <property type="match status" value="1"/>
</dbReference>
<name>NUOC_CUPTR</name>
<reference key="1">
    <citation type="journal article" date="2008" name="Genome Res.">
        <title>Genome sequence of the beta-rhizobium Cupriavidus taiwanensis and comparative genomics of rhizobia.</title>
        <authorList>
            <person name="Amadou C."/>
            <person name="Pascal G."/>
            <person name="Mangenot S."/>
            <person name="Glew M."/>
            <person name="Bontemps C."/>
            <person name="Capela D."/>
            <person name="Carrere S."/>
            <person name="Cruveiller S."/>
            <person name="Dossat C."/>
            <person name="Lajus A."/>
            <person name="Marchetti M."/>
            <person name="Poinsot V."/>
            <person name="Rouy Z."/>
            <person name="Servin B."/>
            <person name="Saad M."/>
            <person name="Schenowitz C."/>
            <person name="Barbe V."/>
            <person name="Batut J."/>
            <person name="Medigue C."/>
            <person name="Masson-Boivin C."/>
        </authorList>
    </citation>
    <scope>NUCLEOTIDE SEQUENCE [LARGE SCALE GENOMIC DNA]</scope>
    <source>
        <strain>DSM 17343 / BCRC 17206 / CCUG 44338 / CIP 107171 / LMG 19424 / R1</strain>
    </source>
</reference>
<evidence type="ECO:0000255" key="1">
    <source>
        <dbReference type="HAMAP-Rule" id="MF_01357"/>
    </source>
</evidence>
<feature type="chain" id="PRO_0000358087" description="NADH-quinone oxidoreductase subunit C">
    <location>
        <begin position="1"/>
        <end position="199"/>
    </location>
</feature>
<accession>B3R3W9</accession>
<sequence length="199" mass="22936">MAKLDTLKAALEKALGKRVQNLVEATGELTLIVKADDYLDVAQILRDDPSLRFEQLIDLCGVDYLEYADGAWDGPRFAAVSQLLSVTHNWRLRLRAFASDDDFPVLPSLINVWNSVNWFEREAFDFYGIVFDGHPDLRRILTDYGFVGHPFRKDFPVSGFVEMRYDPDQKRVIYQPVTIEPRELTPRVIREDKYGGVEH</sequence>
<proteinExistence type="inferred from homology"/>
<organism>
    <name type="scientific">Cupriavidus taiwanensis (strain DSM 17343 / BCRC 17206 / CCUG 44338 / CIP 107171 / LMG 19424 / R1)</name>
    <name type="common">Ralstonia taiwanensis (strain LMG 19424)</name>
    <dbReference type="NCBI Taxonomy" id="977880"/>
    <lineage>
        <taxon>Bacteria</taxon>
        <taxon>Pseudomonadati</taxon>
        <taxon>Pseudomonadota</taxon>
        <taxon>Betaproteobacteria</taxon>
        <taxon>Burkholderiales</taxon>
        <taxon>Burkholderiaceae</taxon>
        <taxon>Cupriavidus</taxon>
    </lineage>
</organism>